<name>MSBA_PSEF5</name>
<reference key="1">
    <citation type="journal article" date="2005" name="Nat. Biotechnol.">
        <title>Complete genome sequence of the plant commensal Pseudomonas fluorescens Pf-5.</title>
        <authorList>
            <person name="Paulsen I.T."/>
            <person name="Press C.M."/>
            <person name="Ravel J."/>
            <person name="Kobayashi D.Y."/>
            <person name="Myers G.S.A."/>
            <person name="Mavrodi D.V."/>
            <person name="DeBoy R.T."/>
            <person name="Seshadri R."/>
            <person name="Ren Q."/>
            <person name="Madupu R."/>
            <person name="Dodson R.J."/>
            <person name="Durkin A.S."/>
            <person name="Brinkac L.M."/>
            <person name="Daugherty S.C."/>
            <person name="Sullivan S.A."/>
            <person name="Rosovitz M.J."/>
            <person name="Gwinn M.L."/>
            <person name="Zhou L."/>
            <person name="Schneider D.J."/>
            <person name="Cartinhour S.W."/>
            <person name="Nelson W.C."/>
            <person name="Weidman J."/>
            <person name="Watkins K."/>
            <person name="Tran K."/>
            <person name="Khouri H."/>
            <person name="Pierson E.A."/>
            <person name="Pierson L.S. III"/>
            <person name="Thomashow L.S."/>
            <person name="Loper J.E."/>
        </authorList>
    </citation>
    <scope>NUCLEOTIDE SEQUENCE [LARGE SCALE GENOMIC DNA]</scope>
    <source>
        <strain>ATCC BAA-477 / NRRL B-23932 / Pf-5</strain>
    </source>
</reference>
<sequence length="601" mass="66169">MTDSSPDASPSSLKIYFRLLGYVRPYIGLFLISIVGFLIFASTQPMLGYILKYFVDGLSNPQAVLFPGVPYLRDMQLLQAVPLLIVLIAAWQGLGSYLGNYFLAKVSLGLVHDLRVQLFNNLLTLPNRYFDKHNSGHLISRITFNVTMVTGAATDAIKVVIREGMTVIFLFGSLLWMNWRLTLVMIAILPLIAVMVRTASKKFRKQSKKIQVAMGDVTHVASETIQGYRVVRSFGGETYEQQRFLAASQGNTDKQLRMTRTGAIYTPLLQLVIYSAMAVLMFLVLYLRGDASAGEMVAYITMAGLLPKPIRQLSEVSSTIQKGVAGAESIFEQLDVEPEVDRGTVERASINGHLEVRNLSFTYPGTERQVLDDISFSIEPGKMVALVGRSGSGKSTLANLIPRFYHHDKGQILLDGTEVEDFRLLNLRRHIAQVTQHVTLFSDTVANNIAYGDLAGAPREDIEKAAADAYAMDFIAQLPEGLDTQVGENGVLLSGGQRQRLAIARALLKNAPLLILDEATSALDTESERHIQAALDKVMKGRTTLVIAHRLSTIEKADLILVMDQGRIVERGSHAQLLAQNGYYSRLHAMGLEEPAPSGIA</sequence>
<feature type="chain" id="PRO_0000271640" description="ATP-dependent lipid A-core flippase">
    <location>
        <begin position="1"/>
        <end position="601"/>
    </location>
</feature>
<feature type="transmembrane region" description="Helical" evidence="1">
    <location>
        <begin position="27"/>
        <end position="47"/>
    </location>
</feature>
<feature type="transmembrane region" description="Helical" evidence="1">
    <location>
        <begin position="83"/>
        <end position="103"/>
    </location>
</feature>
<feature type="transmembrane region" description="Helical" evidence="1">
    <location>
        <begin position="174"/>
        <end position="194"/>
    </location>
</feature>
<feature type="transmembrane region" description="Helical" evidence="1">
    <location>
        <begin position="267"/>
        <end position="287"/>
    </location>
</feature>
<feature type="domain" description="ABC transmembrane type-1" evidence="1">
    <location>
        <begin position="31"/>
        <end position="322"/>
    </location>
</feature>
<feature type="domain" description="ABC transporter" evidence="1">
    <location>
        <begin position="354"/>
        <end position="590"/>
    </location>
</feature>
<feature type="binding site" evidence="1">
    <location>
        <begin position="388"/>
        <end position="395"/>
    </location>
    <ligand>
        <name>ATP</name>
        <dbReference type="ChEBI" id="CHEBI:30616"/>
    </ligand>
</feature>
<protein>
    <recommendedName>
        <fullName evidence="1">ATP-dependent lipid A-core flippase</fullName>
        <ecNumber evidence="1">7.5.2.6</ecNumber>
    </recommendedName>
    <alternativeName>
        <fullName evidence="1">Lipid A export ATP-binding/permease protein MsbA</fullName>
    </alternativeName>
</protein>
<organism>
    <name type="scientific">Pseudomonas fluorescens (strain ATCC BAA-477 / NRRL B-23932 / Pf-5)</name>
    <dbReference type="NCBI Taxonomy" id="220664"/>
    <lineage>
        <taxon>Bacteria</taxon>
        <taxon>Pseudomonadati</taxon>
        <taxon>Pseudomonadota</taxon>
        <taxon>Gammaproteobacteria</taxon>
        <taxon>Pseudomonadales</taxon>
        <taxon>Pseudomonadaceae</taxon>
        <taxon>Pseudomonas</taxon>
    </lineage>
</organism>
<dbReference type="EC" id="7.5.2.6" evidence="1"/>
<dbReference type="EMBL" id="CP000076">
    <property type="protein sequence ID" value="AAY95936.1"/>
    <property type="molecule type" value="Genomic_DNA"/>
</dbReference>
<dbReference type="RefSeq" id="WP_011058900.1">
    <property type="nucleotide sequence ID" value="NC_004129.6"/>
</dbReference>
<dbReference type="SMR" id="Q4KJB2"/>
<dbReference type="STRING" id="220664.PFL_0527"/>
<dbReference type="GeneID" id="57473517"/>
<dbReference type="KEGG" id="pfl:PFL_0527"/>
<dbReference type="PATRIC" id="fig|220664.5.peg.544"/>
<dbReference type="eggNOG" id="COG1132">
    <property type="taxonomic scope" value="Bacteria"/>
</dbReference>
<dbReference type="HOGENOM" id="CLU_000604_84_3_6"/>
<dbReference type="Proteomes" id="UP000008540">
    <property type="component" value="Chromosome"/>
</dbReference>
<dbReference type="GO" id="GO:0005886">
    <property type="term" value="C:plasma membrane"/>
    <property type="evidence" value="ECO:0007669"/>
    <property type="project" value="UniProtKB-SubCell"/>
</dbReference>
<dbReference type="GO" id="GO:0015421">
    <property type="term" value="F:ABC-type oligopeptide transporter activity"/>
    <property type="evidence" value="ECO:0007669"/>
    <property type="project" value="TreeGrafter"/>
</dbReference>
<dbReference type="GO" id="GO:0005524">
    <property type="term" value="F:ATP binding"/>
    <property type="evidence" value="ECO:0007669"/>
    <property type="project" value="UniProtKB-KW"/>
</dbReference>
<dbReference type="GO" id="GO:0016887">
    <property type="term" value="F:ATP hydrolysis activity"/>
    <property type="evidence" value="ECO:0007669"/>
    <property type="project" value="InterPro"/>
</dbReference>
<dbReference type="GO" id="GO:0034040">
    <property type="term" value="F:ATPase-coupled lipid transmembrane transporter activity"/>
    <property type="evidence" value="ECO:0007669"/>
    <property type="project" value="InterPro"/>
</dbReference>
<dbReference type="CDD" id="cd18552">
    <property type="entry name" value="ABC_6TM_MsbA_like"/>
    <property type="match status" value="1"/>
</dbReference>
<dbReference type="CDD" id="cd03251">
    <property type="entry name" value="ABCC_MsbA"/>
    <property type="match status" value="1"/>
</dbReference>
<dbReference type="FunFam" id="3.40.50.300:FF:000140">
    <property type="entry name" value="Lipid A export ATP-binding/permease protein MsbA"/>
    <property type="match status" value="1"/>
</dbReference>
<dbReference type="Gene3D" id="1.20.1560.10">
    <property type="entry name" value="ABC transporter type 1, transmembrane domain"/>
    <property type="match status" value="1"/>
</dbReference>
<dbReference type="Gene3D" id="3.40.50.300">
    <property type="entry name" value="P-loop containing nucleotide triphosphate hydrolases"/>
    <property type="match status" value="1"/>
</dbReference>
<dbReference type="InterPro" id="IPR003593">
    <property type="entry name" value="AAA+_ATPase"/>
</dbReference>
<dbReference type="InterPro" id="IPR011527">
    <property type="entry name" value="ABC1_TM_dom"/>
</dbReference>
<dbReference type="InterPro" id="IPR036640">
    <property type="entry name" value="ABC1_TM_sf"/>
</dbReference>
<dbReference type="InterPro" id="IPR003439">
    <property type="entry name" value="ABC_transporter-like_ATP-bd"/>
</dbReference>
<dbReference type="InterPro" id="IPR017871">
    <property type="entry name" value="ABC_transporter-like_CS"/>
</dbReference>
<dbReference type="InterPro" id="IPR011917">
    <property type="entry name" value="ABC_transpr_lipidA"/>
</dbReference>
<dbReference type="InterPro" id="IPR027417">
    <property type="entry name" value="P-loop_NTPase"/>
</dbReference>
<dbReference type="InterPro" id="IPR039421">
    <property type="entry name" value="Type_1_exporter"/>
</dbReference>
<dbReference type="NCBIfam" id="TIGR02203">
    <property type="entry name" value="MsbA_lipidA"/>
    <property type="match status" value="1"/>
</dbReference>
<dbReference type="PANTHER" id="PTHR43394:SF1">
    <property type="entry name" value="ATP-BINDING CASSETTE SUB-FAMILY B MEMBER 10, MITOCHONDRIAL"/>
    <property type="match status" value="1"/>
</dbReference>
<dbReference type="PANTHER" id="PTHR43394">
    <property type="entry name" value="ATP-DEPENDENT PERMEASE MDL1, MITOCHONDRIAL"/>
    <property type="match status" value="1"/>
</dbReference>
<dbReference type="Pfam" id="PF00664">
    <property type="entry name" value="ABC_membrane"/>
    <property type="match status" value="1"/>
</dbReference>
<dbReference type="Pfam" id="PF00005">
    <property type="entry name" value="ABC_tran"/>
    <property type="match status" value="1"/>
</dbReference>
<dbReference type="SMART" id="SM00382">
    <property type="entry name" value="AAA"/>
    <property type="match status" value="1"/>
</dbReference>
<dbReference type="SUPFAM" id="SSF90123">
    <property type="entry name" value="ABC transporter transmembrane region"/>
    <property type="match status" value="1"/>
</dbReference>
<dbReference type="SUPFAM" id="SSF52540">
    <property type="entry name" value="P-loop containing nucleoside triphosphate hydrolases"/>
    <property type="match status" value="1"/>
</dbReference>
<dbReference type="PROSITE" id="PS50929">
    <property type="entry name" value="ABC_TM1F"/>
    <property type="match status" value="1"/>
</dbReference>
<dbReference type="PROSITE" id="PS00211">
    <property type="entry name" value="ABC_TRANSPORTER_1"/>
    <property type="match status" value="1"/>
</dbReference>
<dbReference type="PROSITE" id="PS50893">
    <property type="entry name" value="ABC_TRANSPORTER_2"/>
    <property type="match status" value="1"/>
</dbReference>
<dbReference type="PROSITE" id="PS51239">
    <property type="entry name" value="MSBA"/>
    <property type="match status" value="1"/>
</dbReference>
<gene>
    <name evidence="1" type="primary">msbA</name>
    <name type="ordered locus">PFL_0527</name>
</gene>
<evidence type="ECO:0000255" key="1">
    <source>
        <dbReference type="HAMAP-Rule" id="MF_01703"/>
    </source>
</evidence>
<proteinExistence type="inferred from homology"/>
<keyword id="KW-0067">ATP-binding</keyword>
<keyword id="KW-0997">Cell inner membrane</keyword>
<keyword id="KW-1003">Cell membrane</keyword>
<keyword id="KW-0445">Lipid transport</keyword>
<keyword id="KW-0472">Membrane</keyword>
<keyword id="KW-0547">Nucleotide-binding</keyword>
<keyword id="KW-1278">Translocase</keyword>
<keyword id="KW-0812">Transmembrane</keyword>
<keyword id="KW-1133">Transmembrane helix</keyword>
<keyword id="KW-0813">Transport</keyword>
<comment type="function">
    <text evidence="1">Involved in lipopolysaccharide (LPS) biosynthesis. Translocates lipid A-core from the inner to the outer leaflet of the inner membrane. Transmembrane domains (TMD) form a pore in the inner membrane and the ATP-binding domain (NBD) is responsible for energy generation.</text>
</comment>
<comment type="catalytic activity">
    <reaction evidence="1">
        <text>ATP + H2O + lipid A-core oligosaccharideSide 1 = ADP + phosphate + lipid A-core oligosaccharideSide 2.</text>
        <dbReference type="EC" id="7.5.2.6"/>
    </reaction>
</comment>
<comment type="subunit">
    <text evidence="1">Homodimer.</text>
</comment>
<comment type="subcellular location">
    <subcellularLocation>
        <location evidence="1">Cell inner membrane</location>
        <topology evidence="1">Multi-pass membrane protein</topology>
    </subcellularLocation>
</comment>
<comment type="domain">
    <text evidence="1">In MsbA the ATP-binding domain (NBD) and the transmembrane domain (TMD) are fused.</text>
</comment>
<comment type="similarity">
    <text evidence="1">Belongs to the ABC transporter superfamily. Lipid exporter (TC 3.A.1.106) family.</text>
</comment>
<accession>Q4KJB2</accession>